<gene>
    <name evidence="1" type="primary">rpsJ</name>
    <name type="ordered locus">Clim_2230</name>
</gene>
<comment type="function">
    <text evidence="1">Involved in the binding of tRNA to the ribosomes.</text>
</comment>
<comment type="subunit">
    <text evidence="1">Part of the 30S ribosomal subunit.</text>
</comment>
<comment type="similarity">
    <text evidence="1">Belongs to the universal ribosomal protein uS10 family.</text>
</comment>
<reference key="1">
    <citation type="submission" date="2008-05" db="EMBL/GenBank/DDBJ databases">
        <title>Complete sequence of Chlorobium limicola DSM 245.</title>
        <authorList>
            <consortium name="US DOE Joint Genome Institute"/>
            <person name="Lucas S."/>
            <person name="Copeland A."/>
            <person name="Lapidus A."/>
            <person name="Glavina del Rio T."/>
            <person name="Dalin E."/>
            <person name="Tice H."/>
            <person name="Bruce D."/>
            <person name="Goodwin L."/>
            <person name="Pitluck S."/>
            <person name="Schmutz J."/>
            <person name="Larimer F."/>
            <person name="Land M."/>
            <person name="Hauser L."/>
            <person name="Kyrpides N."/>
            <person name="Ovchinnikova G."/>
            <person name="Zhao F."/>
            <person name="Li T."/>
            <person name="Liu Z."/>
            <person name="Overmann J."/>
            <person name="Bryant D.A."/>
            <person name="Richardson P."/>
        </authorList>
    </citation>
    <scope>NUCLEOTIDE SEQUENCE [LARGE SCALE GENOMIC DNA]</scope>
    <source>
        <strain>DSM 245 / NBRC 103803 / 6330</strain>
    </source>
</reference>
<name>RS10_CHLL2</name>
<sequence length="103" mass="11865">MAVQQKIRIKLKSYDHSLVDKWALRIIDVVKQTDAIIFGPIPLPTKAHIYTVNRSPHVDKKSREQFSFSSHKRLIEIINPTTRTIDMLMKLELPSGVDVEIKS</sequence>
<proteinExistence type="inferred from homology"/>
<keyword id="KW-0687">Ribonucleoprotein</keyword>
<keyword id="KW-0689">Ribosomal protein</keyword>
<dbReference type="EMBL" id="CP001097">
    <property type="protein sequence ID" value="ACD91254.1"/>
    <property type="molecule type" value="Genomic_DNA"/>
</dbReference>
<dbReference type="RefSeq" id="WP_012467121.1">
    <property type="nucleotide sequence ID" value="NC_010803.1"/>
</dbReference>
<dbReference type="SMR" id="B3EH92"/>
<dbReference type="STRING" id="290315.Clim_2230"/>
<dbReference type="KEGG" id="cli:Clim_2230"/>
<dbReference type="eggNOG" id="COG0051">
    <property type="taxonomic scope" value="Bacteria"/>
</dbReference>
<dbReference type="HOGENOM" id="CLU_122625_1_3_10"/>
<dbReference type="OrthoDB" id="9804464at2"/>
<dbReference type="Proteomes" id="UP000008841">
    <property type="component" value="Chromosome"/>
</dbReference>
<dbReference type="GO" id="GO:1990904">
    <property type="term" value="C:ribonucleoprotein complex"/>
    <property type="evidence" value="ECO:0007669"/>
    <property type="project" value="UniProtKB-KW"/>
</dbReference>
<dbReference type="GO" id="GO:0005840">
    <property type="term" value="C:ribosome"/>
    <property type="evidence" value="ECO:0007669"/>
    <property type="project" value="UniProtKB-KW"/>
</dbReference>
<dbReference type="GO" id="GO:0003735">
    <property type="term" value="F:structural constituent of ribosome"/>
    <property type="evidence" value="ECO:0007669"/>
    <property type="project" value="InterPro"/>
</dbReference>
<dbReference type="GO" id="GO:0000049">
    <property type="term" value="F:tRNA binding"/>
    <property type="evidence" value="ECO:0007669"/>
    <property type="project" value="UniProtKB-UniRule"/>
</dbReference>
<dbReference type="GO" id="GO:0006412">
    <property type="term" value="P:translation"/>
    <property type="evidence" value="ECO:0007669"/>
    <property type="project" value="UniProtKB-UniRule"/>
</dbReference>
<dbReference type="FunFam" id="3.30.70.600:FF:000003">
    <property type="entry name" value="30S ribosomal protein S10"/>
    <property type="match status" value="1"/>
</dbReference>
<dbReference type="Gene3D" id="3.30.70.600">
    <property type="entry name" value="Ribosomal protein S10 domain"/>
    <property type="match status" value="1"/>
</dbReference>
<dbReference type="HAMAP" id="MF_00508">
    <property type="entry name" value="Ribosomal_uS10"/>
    <property type="match status" value="1"/>
</dbReference>
<dbReference type="InterPro" id="IPR001848">
    <property type="entry name" value="Ribosomal_uS10"/>
</dbReference>
<dbReference type="InterPro" id="IPR018268">
    <property type="entry name" value="Ribosomal_uS10_CS"/>
</dbReference>
<dbReference type="InterPro" id="IPR027486">
    <property type="entry name" value="Ribosomal_uS10_dom"/>
</dbReference>
<dbReference type="InterPro" id="IPR036838">
    <property type="entry name" value="Ribosomal_uS10_dom_sf"/>
</dbReference>
<dbReference type="NCBIfam" id="NF001861">
    <property type="entry name" value="PRK00596.1"/>
    <property type="match status" value="1"/>
</dbReference>
<dbReference type="NCBIfam" id="TIGR01049">
    <property type="entry name" value="rpsJ_bact"/>
    <property type="match status" value="1"/>
</dbReference>
<dbReference type="PANTHER" id="PTHR11700">
    <property type="entry name" value="30S RIBOSOMAL PROTEIN S10 FAMILY MEMBER"/>
    <property type="match status" value="1"/>
</dbReference>
<dbReference type="Pfam" id="PF00338">
    <property type="entry name" value="Ribosomal_S10"/>
    <property type="match status" value="1"/>
</dbReference>
<dbReference type="PRINTS" id="PR00971">
    <property type="entry name" value="RIBOSOMALS10"/>
</dbReference>
<dbReference type="SMART" id="SM01403">
    <property type="entry name" value="Ribosomal_S10"/>
    <property type="match status" value="1"/>
</dbReference>
<dbReference type="SUPFAM" id="SSF54999">
    <property type="entry name" value="Ribosomal protein S10"/>
    <property type="match status" value="1"/>
</dbReference>
<dbReference type="PROSITE" id="PS00361">
    <property type="entry name" value="RIBOSOMAL_S10"/>
    <property type="match status" value="1"/>
</dbReference>
<accession>B3EH92</accession>
<organism>
    <name type="scientific">Chlorobium limicola (strain DSM 245 / NBRC 103803 / 6330)</name>
    <dbReference type="NCBI Taxonomy" id="290315"/>
    <lineage>
        <taxon>Bacteria</taxon>
        <taxon>Pseudomonadati</taxon>
        <taxon>Chlorobiota</taxon>
        <taxon>Chlorobiia</taxon>
        <taxon>Chlorobiales</taxon>
        <taxon>Chlorobiaceae</taxon>
        <taxon>Chlorobium/Pelodictyon group</taxon>
        <taxon>Chlorobium</taxon>
    </lineage>
</organism>
<feature type="chain" id="PRO_1000127097" description="Small ribosomal subunit protein uS10">
    <location>
        <begin position="1"/>
        <end position="103"/>
    </location>
</feature>
<protein>
    <recommendedName>
        <fullName evidence="1">Small ribosomal subunit protein uS10</fullName>
    </recommendedName>
    <alternativeName>
        <fullName evidence="2">30S ribosomal protein S10</fullName>
    </alternativeName>
</protein>
<evidence type="ECO:0000255" key="1">
    <source>
        <dbReference type="HAMAP-Rule" id="MF_00508"/>
    </source>
</evidence>
<evidence type="ECO:0000305" key="2"/>